<proteinExistence type="evidence at protein level"/>
<reference key="1">
    <citation type="journal article" date="1983" name="Proc. Natl. Acad. Sci. U.S.A.">
        <title>Gene structure of a phenobarbital-inducible cytochrome P-450 in rat liver.</title>
        <authorList>
            <person name="Mizukami Y."/>
            <person name="Sogawa K."/>
            <person name="Suwa Y."/>
            <person name="Muramatsu M."/>
            <person name="Fujii-Kuriyama Y."/>
        </authorList>
    </citation>
    <scope>NUCLEOTIDE SEQUENCE [GENOMIC DNA] (ISOFORM 1)</scope>
</reference>
<reference key="2">
    <citation type="journal article" date="1985" name="J. Biol. Chem.">
        <title>The structure of phenobarbital-inducible rat liver cytochrome P-450 isoenzyme PB-4. Production and characterization of site-specific antibodies.</title>
        <authorList>
            <person name="Frey A.B."/>
            <person name="Waxman D.J."/>
            <person name="Kreibich G."/>
        </authorList>
    </citation>
    <scope>PROTEIN SEQUENCE (ISOFORM 1)</scope>
</reference>
<reference key="3">
    <citation type="journal article" date="1990" name="Gene">
        <title>Alternative splicing of mRNA encoding rat liver cytochrome P450e (P450IIB2).</title>
        <authorList>
            <person name="Lacroix D."/>
            <person name="Desrochers M."/>
            <person name="Lambert M."/>
            <person name="Anderson A."/>
        </authorList>
    </citation>
    <scope>NUCLEOTIDE SEQUENCE [MRNA] OF 105-491 (ISOFORM 2)</scope>
</reference>
<reference key="4">
    <citation type="journal article" date="1983" name="Gene">
        <title>Cloning and sequence analysis of a rat liver cDNA coding for a phenobarbital-inducible microheterogenous cytochrome P-450 variant: regulation of its messenger level by xenobiotics.</title>
        <authorList>
            <person name="Phillips I.R."/>
            <person name="Shephard E.A."/>
            <person name="Ashworth A."/>
            <person name="Rabin B.R."/>
        </authorList>
    </citation>
    <scope>NUCLEOTIDE SEQUENCE [MRNA] OF 168-491 (ISOFORM 1)</scope>
</reference>
<reference key="5">
    <citation type="journal article" date="1983" name="J. Biol. Chem.">
        <title>Cloned cytochrome P-450 cDNA. Nucleotide sequence and homology to multiple phenobarbital-induced mRNA species.</title>
        <authorList>
            <person name="Kumar A."/>
            <person name="Raphael C."/>
            <person name="Adesnik M."/>
        </authorList>
    </citation>
    <scope>NUCLEOTIDE SEQUENCE [MRNA] OF 281-491</scope>
</reference>
<reference key="6">
    <citation type="journal article" date="1984" name="J. Biol. Chem.">
        <authorList>
            <person name="Kumar A."/>
            <person name="Raphael C."/>
            <person name="Adesnik M."/>
        </authorList>
    </citation>
    <scope>ERRATUM OF PUBMED:6688421</scope>
</reference>
<reference key="7">
    <citation type="journal article" date="1986" name="Proc. Natl. Acad. Sci. U.S.A.">
        <title>Gene conversion in a cytochrome P-450 gene family.</title>
        <authorList>
            <person name="Atchison M.L."/>
            <person name="Adesnik M."/>
        </authorList>
    </citation>
    <scope>NUCLEOTIDE SEQUENCE [GENOMIC DNA] OF 323-431</scope>
</reference>
<reference key="8">
    <citation type="journal article" date="1989" name="Arch. Biochem. Biophys.">
        <title>Antibodies targeted against hypervariable and constant regions of cytochromes P450IIB1 and P450IIB2.</title>
        <authorList>
            <person name="Oesch F."/>
            <person name="Waxman D.J."/>
            <person name="Morrissey J.J."/>
            <person name="Honscha W."/>
            <person name="Kissel W."/>
            <person name="Friedberg T."/>
        </authorList>
    </citation>
    <scope>NUCLEOTIDE SEQUENCE [GENOMIC DNA] OF 329-380 AND 402-423</scope>
</reference>
<reference key="9">
    <citation type="journal article" date="1984" name="Biochem. Biophys. Res. Commun.">
        <title>Segmental homologies in the coding and 3' non-coding sequences of rat liver cytochrome P-450e and P-450b cDNAs and cytochrome P-450e-like genes.</title>
        <authorList>
            <person name="Affolter M."/>
            <person name="Anderson A."/>
        </authorList>
    </citation>
    <scope>NUCLEOTIDE SEQUENCE [MRNA] OF 385-491</scope>
</reference>
<reference key="10">
    <citation type="journal article" date="1988" name="J. Biochem.">
        <title>A mutant rat strain deficient in induction of a phenobarbital-inducible form of cytochrome P-450 in liver microsomes.</title>
        <authorList>
            <person name="Hashimoto T."/>
            <person name="Matsumoto T."/>
            <person name="Nishizawa M."/>
            <person name="Kawabata S."/>
            <person name="Morohashi K."/>
            <person name="Handa S."/>
            <person name="Omura T."/>
        </authorList>
    </citation>
    <scope>NUCLEOTIDE SEQUENCE [GENOMIC DNA] OF 1-20</scope>
</reference>
<reference key="11">
    <citation type="journal article" date="1988" name="Biochem. Pharmacol.">
        <title>Effect of nutritional imbalances on cytochrome P-450 isozymes in rat liver.</title>
        <authorList>
            <person name="Amelizad Z."/>
            <person name="Narbonne J.F."/>
            <person name="Wolf C.R."/>
            <person name="Robertson L.W."/>
            <person name="Oesch F."/>
        </authorList>
    </citation>
    <scope>PROTEIN SEQUENCE OF 1-20</scope>
    <source>
        <tissue>Liver</tissue>
    </source>
</reference>
<reference key="12">
    <citation type="journal article" date="1989" name="EMBO J.">
        <title>Phosphorylation of hepatic phenobarbital-inducible cytochrome P-450.</title>
        <authorList>
            <person name="Pyerin W."/>
            <person name="Taniguchi H."/>
        </authorList>
    </citation>
    <scope>PHOSPHORYLATION AT SER-128</scope>
</reference>
<evidence type="ECO:0000250" key="1"/>
<evidence type="ECO:0000269" key="2">
    <source>
    </source>
</evidence>
<evidence type="ECO:0000303" key="3">
    <source>
    </source>
</evidence>
<evidence type="ECO:0000305" key="4"/>
<organism>
    <name type="scientific">Rattus norvegicus</name>
    <name type="common">Rat</name>
    <dbReference type="NCBI Taxonomy" id="10116"/>
    <lineage>
        <taxon>Eukaryota</taxon>
        <taxon>Metazoa</taxon>
        <taxon>Chordata</taxon>
        <taxon>Craniata</taxon>
        <taxon>Vertebrata</taxon>
        <taxon>Euteleostomi</taxon>
        <taxon>Mammalia</taxon>
        <taxon>Eutheria</taxon>
        <taxon>Euarchontoglires</taxon>
        <taxon>Glires</taxon>
        <taxon>Rodentia</taxon>
        <taxon>Myomorpha</taxon>
        <taxon>Muroidea</taxon>
        <taxon>Muridae</taxon>
        <taxon>Murinae</taxon>
        <taxon>Rattus</taxon>
    </lineage>
</organism>
<name>CP2B2_RAT</name>
<protein>
    <recommendedName>
        <fullName>Cytochrome P450 2B2</fullName>
        <ecNumber>1.14.14.1</ecNumber>
    </recommendedName>
    <alternativeName>
        <fullName>CYPIIB2</fullName>
    </alternativeName>
    <alternativeName>
        <fullName>Cytochrome P450 PB4</fullName>
    </alternativeName>
    <alternativeName>
        <fullName>Cytochrome P450E</fullName>
    </alternativeName>
</protein>
<dbReference type="EC" id="1.14.14.1"/>
<dbReference type="EMBL" id="J00728">
    <property type="protein sequence ID" value="AAA41056.1"/>
    <property type="molecule type" value="Genomic_DNA"/>
</dbReference>
<dbReference type="EMBL" id="J00720">
    <property type="protein sequence ID" value="AAA41056.1"/>
    <property type="status" value="JOINED"/>
    <property type="molecule type" value="Genomic_DNA"/>
</dbReference>
<dbReference type="EMBL" id="J00721">
    <property type="protein sequence ID" value="AAA41056.1"/>
    <property type="status" value="JOINED"/>
    <property type="molecule type" value="Genomic_DNA"/>
</dbReference>
<dbReference type="EMBL" id="J00722">
    <property type="protein sequence ID" value="AAA41056.1"/>
    <property type="status" value="JOINED"/>
    <property type="molecule type" value="Genomic_DNA"/>
</dbReference>
<dbReference type="EMBL" id="J00723">
    <property type="protein sequence ID" value="AAA41056.1"/>
    <property type="status" value="JOINED"/>
    <property type="molecule type" value="Genomic_DNA"/>
</dbReference>
<dbReference type="EMBL" id="J00724">
    <property type="protein sequence ID" value="AAA41056.1"/>
    <property type="status" value="JOINED"/>
    <property type="molecule type" value="Genomic_DNA"/>
</dbReference>
<dbReference type="EMBL" id="J00725">
    <property type="protein sequence ID" value="AAA41056.1"/>
    <property type="status" value="JOINED"/>
    <property type="molecule type" value="Genomic_DNA"/>
</dbReference>
<dbReference type="EMBL" id="J00726">
    <property type="protein sequence ID" value="AAA41056.1"/>
    <property type="status" value="JOINED"/>
    <property type="molecule type" value="Genomic_DNA"/>
</dbReference>
<dbReference type="EMBL" id="M34452">
    <property type="protein sequence ID" value="AAA41004.1"/>
    <property type="molecule type" value="mRNA"/>
</dbReference>
<dbReference type="EMBL" id="K01721">
    <property type="protein sequence ID" value="AAA41026.1"/>
    <property type="molecule type" value="mRNA"/>
</dbReference>
<dbReference type="EMBL" id="K00996">
    <property type="protein sequence ID" value="AAA41029.1"/>
    <property type="molecule type" value="mRNA"/>
</dbReference>
<dbReference type="EMBL" id="M13234">
    <property type="protein sequence ID" value="AAA41057.1"/>
    <property type="molecule type" value="Genomic_DNA"/>
</dbReference>
<dbReference type="EMBL" id="K01626">
    <property type="protein sequence ID" value="AAA41037.1"/>
    <property type="molecule type" value="mRNA"/>
</dbReference>
<dbReference type="EMBL" id="D00250">
    <property type="protein sequence ID" value="BAA00181.1"/>
    <property type="molecule type" value="Genomic_DNA"/>
</dbReference>
<dbReference type="PIR" id="A21162">
    <property type="entry name" value="O4RTP2"/>
</dbReference>
<dbReference type="PIR" id="A60822">
    <property type="entry name" value="A60822"/>
</dbReference>
<dbReference type="RefSeq" id="NP_001185605.1">
    <property type="nucleotide sequence ID" value="NM_001198676.1"/>
</dbReference>
<dbReference type="SMR" id="P04167"/>
<dbReference type="FunCoup" id="P04167">
    <property type="interactions" value="54"/>
</dbReference>
<dbReference type="STRING" id="10116.ENSRNOP00000045196"/>
<dbReference type="iPTMnet" id="P04167"/>
<dbReference type="PaxDb" id="10116-ENSRNOP00000045196"/>
<dbReference type="PeptideAtlas" id="P04167"/>
<dbReference type="GeneID" id="361523"/>
<dbReference type="KEGG" id="rno:361523"/>
<dbReference type="UCSC" id="RGD:2467">
    <molecule id="P04167-1"/>
    <property type="organism name" value="rat"/>
</dbReference>
<dbReference type="AGR" id="RGD:2467"/>
<dbReference type="CTD" id="361523"/>
<dbReference type="RGD" id="2467">
    <property type="gene designation" value="Cyp2b2"/>
</dbReference>
<dbReference type="eggNOG" id="KOG0156">
    <property type="taxonomic scope" value="Eukaryota"/>
</dbReference>
<dbReference type="InParanoid" id="P04167"/>
<dbReference type="OrthoDB" id="72591at9989"/>
<dbReference type="PhylomeDB" id="P04167"/>
<dbReference type="PRO" id="PR:P04167"/>
<dbReference type="Proteomes" id="UP000002494">
    <property type="component" value="Unplaced"/>
</dbReference>
<dbReference type="GO" id="GO:0005737">
    <property type="term" value="C:cytoplasm"/>
    <property type="evidence" value="ECO:0000318"/>
    <property type="project" value="GO_Central"/>
</dbReference>
<dbReference type="GO" id="GO:0005789">
    <property type="term" value="C:endoplasmic reticulum membrane"/>
    <property type="evidence" value="ECO:0007669"/>
    <property type="project" value="UniProtKB-SubCell"/>
</dbReference>
<dbReference type="GO" id="GO:0043231">
    <property type="term" value="C:intracellular membrane-bounded organelle"/>
    <property type="evidence" value="ECO:0000318"/>
    <property type="project" value="GO_Central"/>
</dbReference>
<dbReference type="GO" id="GO:0008392">
    <property type="term" value="F:arachidonate epoxygenase activity"/>
    <property type="evidence" value="ECO:0000318"/>
    <property type="project" value="GO_Central"/>
</dbReference>
<dbReference type="GO" id="GO:0020037">
    <property type="term" value="F:heme binding"/>
    <property type="evidence" value="ECO:0000318"/>
    <property type="project" value="GO_Central"/>
</dbReference>
<dbReference type="GO" id="GO:0005506">
    <property type="term" value="F:iron ion binding"/>
    <property type="evidence" value="ECO:0007669"/>
    <property type="project" value="InterPro"/>
</dbReference>
<dbReference type="GO" id="GO:0016491">
    <property type="term" value="F:oxidoreductase activity"/>
    <property type="evidence" value="ECO:0000314"/>
    <property type="project" value="RGD"/>
</dbReference>
<dbReference type="GO" id="GO:0016712">
    <property type="term" value="F:oxidoreductase activity, acting on paired donors, with incorporation or reduction of molecular oxygen, reduced flavin or flavoprotein as one donor, and incorporation of one atom of oxygen"/>
    <property type="evidence" value="ECO:0000318"/>
    <property type="project" value="GO_Central"/>
</dbReference>
<dbReference type="GO" id="GO:0008395">
    <property type="term" value="F:steroid hydroxylase activity"/>
    <property type="evidence" value="ECO:0000314"/>
    <property type="project" value="RGD"/>
</dbReference>
<dbReference type="GO" id="GO:0019373">
    <property type="term" value="P:epoxygenase P450 pathway"/>
    <property type="evidence" value="ECO:0000318"/>
    <property type="project" value="GO_Central"/>
</dbReference>
<dbReference type="GO" id="GO:0018933">
    <property type="term" value="P:nicotine metabolic process"/>
    <property type="evidence" value="ECO:0000270"/>
    <property type="project" value="RGD"/>
</dbReference>
<dbReference type="GO" id="GO:0051592">
    <property type="term" value="P:response to calcium ion"/>
    <property type="evidence" value="ECO:0000270"/>
    <property type="project" value="RGD"/>
</dbReference>
<dbReference type="GO" id="GO:0010038">
    <property type="term" value="P:response to metal ion"/>
    <property type="evidence" value="ECO:0000270"/>
    <property type="project" value="RGD"/>
</dbReference>
<dbReference type="GO" id="GO:0006805">
    <property type="term" value="P:xenobiotic metabolic process"/>
    <property type="evidence" value="ECO:0000314"/>
    <property type="project" value="RGD"/>
</dbReference>
<dbReference type="CDD" id="cd20672">
    <property type="entry name" value="CYP2B"/>
    <property type="match status" value="1"/>
</dbReference>
<dbReference type="FunFam" id="1.10.630.10:FF:000001">
    <property type="entry name" value="Cytochrome P450, family 2"/>
    <property type="match status" value="1"/>
</dbReference>
<dbReference type="Gene3D" id="1.10.630.10">
    <property type="entry name" value="Cytochrome P450"/>
    <property type="match status" value="1"/>
</dbReference>
<dbReference type="InterPro" id="IPR001128">
    <property type="entry name" value="Cyt_P450"/>
</dbReference>
<dbReference type="InterPro" id="IPR017972">
    <property type="entry name" value="Cyt_P450_CS"/>
</dbReference>
<dbReference type="InterPro" id="IPR002401">
    <property type="entry name" value="Cyt_P450_E_grp-I"/>
</dbReference>
<dbReference type="InterPro" id="IPR008068">
    <property type="entry name" value="Cyt_P450_E_grp-I_CYP2B-like"/>
</dbReference>
<dbReference type="InterPro" id="IPR036396">
    <property type="entry name" value="Cyt_P450_sf"/>
</dbReference>
<dbReference type="InterPro" id="IPR050182">
    <property type="entry name" value="Cytochrome_P450_fam2"/>
</dbReference>
<dbReference type="PANTHER" id="PTHR24300:SF406">
    <property type="entry name" value="CYTOCHROME P450 2B6"/>
    <property type="match status" value="1"/>
</dbReference>
<dbReference type="PANTHER" id="PTHR24300">
    <property type="entry name" value="CYTOCHROME P450 508A4-RELATED"/>
    <property type="match status" value="1"/>
</dbReference>
<dbReference type="Pfam" id="PF00067">
    <property type="entry name" value="p450"/>
    <property type="match status" value="1"/>
</dbReference>
<dbReference type="PRINTS" id="PR00463">
    <property type="entry name" value="EP450I"/>
</dbReference>
<dbReference type="PRINTS" id="PR01685">
    <property type="entry name" value="EP450ICYP2B"/>
</dbReference>
<dbReference type="PRINTS" id="PR00385">
    <property type="entry name" value="P450"/>
</dbReference>
<dbReference type="SUPFAM" id="SSF48264">
    <property type="entry name" value="Cytochrome P450"/>
    <property type="match status" value="1"/>
</dbReference>
<dbReference type="PROSITE" id="PS00086">
    <property type="entry name" value="CYTOCHROME_P450"/>
    <property type="match status" value="1"/>
</dbReference>
<accession>P04167</accession>
<accession>Q64579</accession>
<accession>Q64582</accession>
<gene>
    <name type="primary">Cyp2b2</name>
    <name type="synonym">Cyp2b-2</name>
</gene>
<keyword id="KW-0025">Alternative splicing</keyword>
<keyword id="KW-0903">Direct protein sequencing</keyword>
<keyword id="KW-0256">Endoplasmic reticulum</keyword>
<keyword id="KW-0349">Heme</keyword>
<keyword id="KW-0408">Iron</keyword>
<keyword id="KW-0472">Membrane</keyword>
<keyword id="KW-0479">Metal-binding</keyword>
<keyword id="KW-0492">Microsome</keyword>
<keyword id="KW-0503">Monooxygenase</keyword>
<keyword id="KW-0560">Oxidoreductase</keyword>
<keyword id="KW-0597">Phosphoprotein</keyword>
<keyword id="KW-1185">Reference proteome</keyword>
<sequence length="491" mass="55933">MEPSILLLLALLVGFLLLLVRGHPKSRGNFPPGPRPLPLLGNLLQLDRGGLLNSFMQLREKYGDVFTVHLGPRPVVMLCGTDTIKEALVGQAEDFSGRGTIAVIEPIFKEYGVIFANGERWKALRRFSLATMRDFGMGKRSVEERIQEEAQCLVEELRKSQGAPLDPTFLFQCITANIICSIVFGERFDYTDRQFLRLLELFYRTFSLLSSFSSQVFEFFSGFLKYFPGAHRQISKNLQEILDYIGHIVEKHRATLDPSAPRDFIDTYLLRMEKEKSNHHTEFHHENLMISLLSLFFAGTETGSTTLRYGFLLMLKYPHVTEKVQKEIDQVIGSHRPPSLDDRTKMPYTDAVIHEIQRFADLAPIGLPHRVTKDTMFRGYLLPKNTEVYPILSSALHDPQYFDHPDTFNPEHFLDADGTLKKSEAFMPFSTGKRICLGEGIARNELFLFFTTILQNFSVSSHLAPKDIDLTPKESGIAKIPPTYQICFSAR</sequence>
<feature type="chain" id="PRO_0000051679" description="Cytochrome P450 2B2">
    <location>
        <begin position="1"/>
        <end position="491"/>
    </location>
</feature>
<feature type="binding site" description="axial binding residue">
    <location>
        <position position="436"/>
    </location>
    <ligand>
        <name>heme</name>
        <dbReference type="ChEBI" id="CHEBI:30413"/>
    </ligand>
    <ligandPart>
        <name>Fe</name>
        <dbReference type="ChEBI" id="CHEBI:18248"/>
    </ligandPart>
</feature>
<feature type="modified residue" description="Phosphoserine; by PKA" evidence="2">
    <location>
        <position position="128"/>
    </location>
</feature>
<feature type="splice variant" id="VSP_011939" description="In isoform 2." evidence="3">
    <original>K</original>
    <variation>KVSPAWMRE</variation>
    <location>
        <position position="274"/>
    </location>
</feature>
<feature type="sequence conflict" description="In Ref. 3; AAA41004." evidence="4" ref="3">
    <original>I</original>
    <variation>F</variation>
    <location>
        <position position="114"/>
    </location>
</feature>
<feature type="sequence conflict" description="In Ref. 2; AA sequence." evidence="4" ref="2">
    <original>L</original>
    <variation>P</variation>
    <location>
        <position position="292"/>
    </location>
</feature>
<feature type="sequence conflict" description="In Ref. 2; AA sequence and 5; AAA41029." evidence="4" ref="2 5">
    <original>T</original>
    <variation>A</variation>
    <location>
        <position position="321"/>
    </location>
</feature>
<feature type="sequence conflict" description="In Ref. 1; AAA41056." evidence="4" ref="1">
    <original>E</original>
    <variation>V</variation>
    <location>
        <position position="322"/>
    </location>
</feature>
<feature type="sequence conflict" description="In Ref. 8; no nucleotide entry." evidence="4" ref="8">
    <original>FA</original>
    <variation>AS</variation>
    <location>
        <begin position="359"/>
        <end position="360"/>
    </location>
</feature>
<feature type="sequence conflict" description="In Ref. 5; AAA41029." evidence="4" ref="5">
    <original>G</original>
    <variation>D</variation>
    <location>
        <position position="438"/>
    </location>
</feature>
<feature type="sequence conflict" description="In Ref. 4; AAA41026." evidence="4" ref="4">
    <original>N</original>
    <variation>K</variation>
    <location>
        <position position="444"/>
    </location>
</feature>
<feature type="sequence conflict" description="In Ref. 1; AAA41056." evidence="4" ref="1">
    <original>K</original>
    <variation>M</variation>
    <location>
        <position position="473"/>
    </location>
</feature>
<feature type="sequence conflict" description="In Ref. 2; AA sequence and 5; AAA41029." evidence="4" ref="2 5">
    <original>G</original>
    <variation>D</variation>
    <location>
        <position position="476"/>
    </location>
</feature>
<comment type="function">
    <text>Cytochromes P450 are a group of heme-thiolate monooxygenases. In liver microsomes, this enzyme is involved in an NADPH-dependent electron transport pathway. It oxidizes a variety of structurally unrelated compounds, including steroids, fatty acids, and xenobiotics.</text>
</comment>
<comment type="catalytic activity">
    <reaction>
        <text>an organic molecule + reduced [NADPH--hemoprotein reductase] + O2 = an alcohol + oxidized [NADPH--hemoprotein reductase] + H2O + H(+)</text>
        <dbReference type="Rhea" id="RHEA:17149"/>
        <dbReference type="Rhea" id="RHEA-COMP:11964"/>
        <dbReference type="Rhea" id="RHEA-COMP:11965"/>
        <dbReference type="ChEBI" id="CHEBI:15377"/>
        <dbReference type="ChEBI" id="CHEBI:15378"/>
        <dbReference type="ChEBI" id="CHEBI:15379"/>
        <dbReference type="ChEBI" id="CHEBI:30879"/>
        <dbReference type="ChEBI" id="CHEBI:57618"/>
        <dbReference type="ChEBI" id="CHEBI:58210"/>
        <dbReference type="ChEBI" id="CHEBI:142491"/>
        <dbReference type="EC" id="1.14.14.1"/>
    </reaction>
</comment>
<comment type="cofactor">
    <cofactor evidence="1">
        <name>heme</name>
        <dbReference type="ChEBI" id="CHEBI:30413"/>
    </cofactor>
</comment>
<comment type="subcellular location">
    <subcellularLocation>
        <location>Endoplasmic reticulum membrane</location>
        <topology>Peripheral membrane protein</topology>
    </subcellularLocation>
    <subcellularLocation>
        <location>Microsome membrane</location>
        <topology>Peripheral membrane protein</topology>
    </subcellularLocation>
</comment>
<comment type="alternative products">
    <event type="alternative splicing"/>
    <isoform>
        <id>P04167-1</id>
        <name>1</name>
        <sequence type="displayed"/>
    </isoform>
    <isoform>
        <id>P04167-2</id>
        <name>2</name>
        <sequence type="described" ref="VSP_011939"/>
    </isoform>
</comment>
<comment type="induction">
    <text>By phenobarbital.</text>
</comment>
<comment type="PTM">
    <text evidence="2">Phosphorylation is accompanied by a decrease in enzyme activity.</text>
</comment>
<comment type="similarity">
    <text evidence="4">Belongs to the cytochrome P450 family.</text>
</comment>